<evidence type="ECO:0000255" key="1">
    <source>
        <dbReference type="HAMAP-Rule" id="MF_01636"/>
    </source>
</evidence>
<gene>
    <name evidence="1" type="primary">ubiD</name>
    <name type="ordered locus">CV_4104</name>
</gene>
<feature type="chain" id="PRO_0000267659" description="3-octaprenyl-4-hydroxybenzoate carboxy-lyase">
    <location>
        <begin position="1"/>
        <end position="491"/>
    </location>
</feature>
<feature type="active site" description="Proton donor" evidence="1">
    <location>
        <position position="291"/>
    </location>
</feature>
<feature type="binding site" evidence="1">
    <location>
        <position position="176"/>
    </location>
    <ligand>
        <name>Mn(2+)</name>
        <dbReference type="ChEBI" id="CHEBI:29035"/>
    </ligand>
</feature>
<feature type="binding site" evidence="1">
    <location>
        <begin position="179"/>
        <end position="181"/>
    </location>
    <ligand>
        <name>prenylated FMN</name>
        <dbReference type="ChEBI" id="CHEBI:87746"/>
    </ligand>
</feature>
<feature type="binding site" evidence="1">
    <location>
        <begin position="193"/>
        <end position="195"/>
    </location>
    <ligand>
        <name>prenylated FMN</name>
        <dbReference type="ChEBI" id="CHEBI:87746"/>
    </ligand>
</feature>
<feature type="binding site" evidence="1">
    <location>
        <begin position="198"/>
        <end position="199"/>
    </location>
    <ligand>
        <name>prenylated FMN</name>
        <dbReference type="ChEBI" id="CHEBI:87746"/>
    </ligand>
</feature>
<feature type="binding site" evidence="1">
    <location>
        <position position="242"/>
    </location>
    <ligand>
        <name>Mn(2+)</name>
        <dbReference type="ChEBI" id="CHEBI:29035"/>
    </ligand>
</feature>
<keyword id="KW-1003">Cell membrane</keyword>
<keyword id="KW-0210">Decarboxylase</keyword>
<keyword id="KW-0285">Flavoprotein</keyword>
<keyword id="KW-0288">FMN</keyword>
<keyword id="KW-0456">Lyase</keyword>
<keyword id="KW-0464">Manganese</keyword>
<keyword id="KW-0472">Membrane</keyword>
<keyword id="KW-0479">Metal-binding</keyword>
<keyword id="KW-1185">Reference proteome</keyword>
<keyword id="KW-0831">Ubiquinone biosynthesis</keyword>
<dbReference type="EC" id="4.1.1.98" evidence="1"/>
<dbReference type="EMBL" id="AE016825">
    <property type="protein sequence ID" value="AAQ61765.1"/>
    <property type="molecule type" value="Genomic_DNA"/>
</dbReference>
<dbReference type="RefSeq" id="WP_011137651.1">
    <property type="nucleotide sequence ID" value="NC_005085.1"/>
</dbReference>
<dbReference type="SMR" id="Q7NQN3"/>
<dbReference type="STRING" id="243365.CV_4104"/>
<dbReference type="GeneID" id="66366429"/>
<dbReference type="KEGG" id="cvi:CV_4104"/>
<dbReference type="eggNOG" id="COG0043">
    <property type="taxonomic scope" value="Bacteria"/>
</dbReference>
<dbReference type="HOGENOM" id="CLU_023348_4_1_4"/>
<dbReference type="OrthoDB" id="9809841at2"/>
<dbReference type="UniPathway" id="UPA00232"/>
<dbReference type="Proteomes" id="UP000001424">
    <property type="component" value="Chromosome"/>
</dbReference>
<dbReference type="GO" id="GO:0005829">
    <property type="term" value="C:cytosol"/>
    <property type="evidence" value="ECO:0007669"/>
    <property type="project" value="TreeGrafter"/>
</dbReference>
<dbReference type="GO" id="GO:0005886">
    <property type="term" value="C:plasma membrane"/>
    <property type="evidence" value="ECO:0007669"/>
    <property type="project" value="UniProtKB-SubCell"/>
</dbReference>
<dbReference type="GO" id="GO:0008694">
    <property type="term" value="F:3-octaprenyl-4-hydroxybenzoate carboxy-lyase activity"/>
    <property type="evidence" value="ECO:0007669"/>
    <property type="project" value="UniProtKB-UniRule"/>
</dbReference>
<dbReference type="GO" id="GO:0046872">
    <property type="term" value="F:metal ion binding"/>
    <property type="evidence" value="ECO:0007669"/>
    <property type="project" value="UniProtKB-KW"/>
</dbReference>
<dbReference type="GO" id="GO:0006744">
    <property type="term" value="P:ubiquinone biosynthetic process"/>
    <property type="evidence" value="ECO:0007669"/>
    <property type="project" value="UniProtKB-UniRule"/>
</dbReference>
<dbReference type="FunFam" id="1.20.5.570:FF:000001">
    <property type="entry name" value="3-octaprenyl-4-hydroxybenzoate carboxy-lyase"/>
    <property type="match status" value="1"/>
</dbReference>
<dbReference type="FunFam" id="3.40.1670.10:FF:000001">
    <property type="entry name" value="3-octaprenyl-4-hydroxybenzoate carboxy-lyase"/>
    <property type="match status" value="1"/>
</dbReference>
<dbReference type="Gene3D" id="1.20.5.570">
    <property type="entry name" value="Single helix bin"/>
    <property type="match status" value="1"/>
</dbReference>
<dbReference type="Gene3D" id="3.40.1670.10">
    <property type="entry name" value="UbiD C-terminal domain-like"/>
    <property type="match status" value="1"/>
</dbReference>
<dbReference type="HAMAP" id="MF_01636">
    <property type="entry name" value="UbiD"/>
    <property type="match status" value="1"/>
</dbReference>
<dbReference type="InterPro" id="IPR002830">
    <property type="entry name" value="UbiD"/>
</dbReference>
<dbReference type="InterPro" id="IPR049381">
    <property type="entry name" value="UbiD-like_C"/>
</dbReference>
<dbReference type="InterPro" id="IPR049383">
    <property type="entry name" value="UbiD-like_N"/>
</dbReference>
<dbReference type="InterPro" id="IPR023677">
    <property type="entry name" value="UbiD_bacteria"/>
</dbReference>
<dbReference type="InterPro" id="IPR048304">
    <property type="entry name" value="UbiD_Rift_dom"/>
</dbReference>
<dbReference type="NCBIfam" id="NF008175">
    <property type="entry name" value="PRK10922.1"/>
    <property type="match status" value="1"/>
</dbReference>
<dbReference type="NCBIfam" id="TIGR00148">
    <property type="entry name" value="UbiD family decarboxylase"/>
    <property type="match status" value="1"/>
</dbReference>
<dbReference type="PANTHER" id="PTHR30108">
    <property type="entry name" value="3-OCTAPRENYL-4-HYDROXYBENZOATE CARBOXY-LYASE-RELATED"/>
    <property type="match status" value="1"/>
</dbReference>
<dbReference type="PANTHER" id="PTHR30108:SF17">
    <property type="entry name" value="FERULIC ACID DECARBOXYLASE 1"/>
    <property type="match status" value="1"/>
</dbReference>
<dbReference type="Pfam" id="PF01977">
    <property type="entry name" value="UbiD"/>
    <property type="match status" value="1"/>
</dbReference>
<dbReference type="Pfam" id="PF20696">
    <property type="entry name" value="UbiD_C"/>
    <property type="match status" value="1"/>
</dbReference>
<dbReference type="Pfam" id="PF20695">
    <property type="entry name" value="UbiD_N"/>
    <property type="match status" value="1"/>
</dbReference>
<dbReference type="SUPFAM" id="SSF50475">
    <property type="entry name" value="FMN-binding split barrel"/>
    <property type="match status" value="1"/>
</dbReference>
<dbReference type="SUPFAM" id="SSF143968">
    <property type="entry name" value="UbiD C-terminal domain-like"/>
    <property type="match status" value="1"/>
</dbReference>
<proteinExistence type="inferred from homology"/>
<protein>
    <recommendedName>
        <fullName evidence="1">3-octaprenyl-4-hydroxybenzoate carboxy-lyase</fullName>
        <ecNumber evidence="1">4.1.1.98</ecNumber>
    </recommendedName>
    <alternativeName>
        <fullName evidence="1">Polyprenyl p-hydroxybenzoate decarboxylase</fullName>
    </alternativeName>
</protein>
<accession>Q7NQN3</accession>
<reference key="1">
    <citation type="journal article" date="2003" name="Proc. Natl. Acad. Sci. U.S.A.">
        <title>The complete genome sequence of Chromobacterium violaceum reveals remarkable and exploitable bacterial adaptability.</title>
        <authorList>
            <person name="Vasconcelos A.T.R."/>
            <person name="de Almeida D.F."/>
            <person name="Hungria M."/>
            <person name="Guimaraes C.T."/>
            <person name="Antonio R.V."/>
            <person name="Almeida F.C."/>
            <person name="de Almeida L.G.P."/>
            <person name="de Almeida R."/>
            <person name="Alves-Gomes J.A."/>
            <person name="Andrade E.M."/>
            <person name="Araripe J."/>
            <person name="de Araujo M.F.F."/>
            <person name="Astolfi-Filho S."/>
            <person name="Azevedo V."/>
            <person name="Baptista A.J."/>
            <person name="Bataus L.A.M."/>
            <person name="Batista J.S."/>
            <person name="Belo A."/>
            <person name="van den Berg C."/>
            <person name="Bogo M."/>
            <person name="Bonatto S."/>
            <person name="Bordignon J."/>
            <person name="Brigido M.M."/>
            <person name="Brito C.A."/>
            <person name="Brocchi M."/>
            <person name="Burity H.A."/>
            <person name="Camargo A.A."/>
            <person name="Cardoso D.D.P."/>
            <person name="Carneiro N.P."/>
            <person name="Carraro D.M."/>
            <person name="Carvalho C.M.B."/>
            <person name="Cascardo J.C.M."/>
            <person name="Cavada B.S."/>
            <person name="Chueire L.M.O."/>
            <person name="Creczynski-Pasa T.B."/>
            <person name="Cunha-Junior N.C."/>
            <person name="Fagundes N."/>
            <person name="Falcao C.L."/>
            <person name="Fantinatti F."/>
            <person name="Farias I.P."/>
            <person name="Felipe M.S.S."/>
            <person name="Ferrari L.P."/>
            <person name="Ferro J.A."/>
            <person name="Ferro M.I.T."/>
            <person name="Franco G.R."/>
            <person name="Freitas N.S.A."/>
            <person name="Furlan L.R."/>
            <person name="Gazzinelli R.T."/>
            <person name="Gomes E.A."/>
            <person name="Goncalves P.R."/>
            <person name="Grangeiro T.B."/>
            <person name="Grattapaglia D."/>
            <person name="Grisard E.C."/>
            <person name="Hanna E.S."/>
            <person name="Jardim S.N."/>
            <person name="Laurino J."/>
            <person name="Leoi L.C.T."/>
            <person name="Lima L.F.A."/>
            <person name="Loureiro M.F."/>
            <person name="Lyra M.C.C.P."/>
            <person name="Madeira H.M.F."/>
            <person name="Manfio G.P."/>
            <person name="Maranhao A.Q."/>
            <person name="Martins W.S."/>
            <person name="di Mauro S.M.Z."/>
            <person name="de Medeiros S.R.B."/>
            <person name="Meissner R.V."/>
            <person name="Moreira M.A.M."/>
            <person name="Nascimento F.F."/>
            <person name="Nicolas M.F."/>
            <person name="Oliveira J.G."/>
            <person name="Oliveira S.C."/>
            <person name="Paixao R.F.C."/>
            <person name="Parente J.A."/>
            <person name="Pedrosa F.O."/>
            <person name="Pena S.D.J."/>
            <person name="Pereira J.O."/>
            <person name="Pereira M."/>
            <person name="Pinto L.S.R.C."/>
            <person name="Pinto L.S."/>
            <person name="Porto J.I.R."/>
            <person name="Potrich D.P."/>
            <person name="Ramalho-Neto C.E."/>
            <person name="Reis A.M.M."/>
            <person name="Rigo L.U."/>
            <person name="Rondinelli E."/>
            <person name="Santos E.B.P."/>
            <person name="Santos F.R."/>
            <person name="Schneider M.P.C."/>
            <person name="Seuanez H.N."/>
            <person name="Silva A.M.R."/>
            <person name="da Silva A.L.C."/>
            <person name="Silva D.W."/>
            <person name="Silva R."/>
            <person name="Simoes I.C."/>
            <person name="Simon D."/>
            <person name="Soares C.M.A."/>
            <person name="Soares R.B.A."/>
            <person name="Souza E.M."/>
            <person name="Souza K.R.L."/>
            <person name="Souza R.C."/>
            <person name="Steffens M.B.R."/>
            <person name="Steindel M."/>
            <person name="Teixeira S.R."/>
            <person name="Urmenyi T."/>
            <person name="Vettore A."/>
            <person name="Wassem R."/>
            <person name="Zaha A."/>
            <person name="Simpson A.J.G."/>
        </authorList>
    </citation>
    <scope>NUCLEOTIDE SEQUENCE [LARGE SCALE GENOMIC DNA]</scope>
    <source>
        <strain>ATCC 12472 / DSM 30191 / JCM 1249 / CCUG 213 / NBRC 12614 / NCIMB 9131 / NCTC 9757 / MK</strain>
    </source>
</reference>
<comment type="function">
    <text evidence="1">Catalyzes the decarboxylation of 3-octaprenyl-4-hydroxy benzoate to 2-octaprenylphenol, an intermediate step in ubiquinone biosynthesis.</text>
</comment>
<comment type="catalytic activity">
    <reaction evidence="1">
        <text>a 4-hydroxy-3-(all-trans-polyprenyl)benzoate + H(+) = a 2-(all-trans-polyprenyl)phenol + CO2</text>
        <dbReference type="Rhea" id="RHEA:41680"/>
        <dbReference type="Rhea" id="RHEA-COMP:9514"/>
        <dbReference type="Rhea" id="RHEA-COMP:9516"/>
        <dbReference type="ChEBI" id="CHEBI:1269"/>
        <dbReference type="ChEBI" id="CHEBI:15378"/>
        <dbReference type="ChEBI" id="CHEBI:16526"/>
        <dbReference type="ChEBI" id="CHEBI:78396"/>
        <dbReference type="EC" id="4.1.1.98"/>
    </reaction>
</comment>
<comment type="cofactor">
    <cofactor evidence="1">
        <name>prenylated FMN</name>
        <dbReference type="ChEBI" id="CHEBI:87746"/>
    </cofactor>
    <text evidence="1">Binds 1 prenylated FMN per subunit.</text>
</comment>
<comment type="cofactor">
    <cofactor evidence="1">
        <name>Mn(2+)</name>
        <dbReference type="ChEBI" id="CHEBI:29035"/>
    </cofactor>
</comment>
<comment type="pathway">
    <text evidence="1">Cofactor biosynthesis; ubiquinone biosynthesis.</text>
</comment>
<comment type="subunit">
    <text evidence="1">Homohexamer.</text>
</comment>
<comment type="subcellular location">
    <subcellularLocation>
        <location evidence="1">Cell membrane</location>
        <topology evidence="1">Peripheral membrane protein</topology>
    </subcellularLocation>
</comment>
<comment type="similarity">
    <text evidence="1">Belongs to the UbiD family.</text>
</comment>
<name>UBID_CHRVO</name>
<organism>
    <name type="scientific">Chromobacterium violaceum (strain ATCC 12472 / DSM 30191 / JCM 1249 / CCUG 213 / NBRC 12614 / NCIMB 9131 / NCTC 9757 / MK)</name>
    <dbReference type="NCBI Taxonomy" id="243365"/>
    <lineage>
        <taxon>Bacteria</taxon>
        <taxon>Pseudomonadati</taxon>
        <taxon>Pseudomonadota</taxon>
        <taxon>Betaproteobacteria</taxon>
        <taxon>Neisseriales</taxon>
        <taxon>Chromobacteriaceae</taxon>
        <taxon>Chromobacterium</taxon>
    </lineage>
</organism>
<sequence>MKYADLREFIAQLEQKQLLKRIKTPVSPHLEMTEIGDRVLKAGGPALLFEQPVDNGRRYDFPVLANLFGTPERVAMGMGADDVMQLREIGRTLAYLKEPEPPKGLKDAWDKLPLLKQVLSMAPKEVKKAPCQDIVWEGEAVDLGKLPIQHCWPGDAAPLITWGLTVTRGPNKKRQNLGIYRQQVIGKNRVIMRWLAHRGGALDYREFRQQNPDTPYPVAVVLGCDPATILGAVTPVPDTLSEYQFAGLLRGSRTELAQCLGSDLQVPARAEIVLEGHIHPNDMALEGPYGDHTGYYNEQDSFPVLTIDRITMRENPIYHSTYTGKPPDEPAILGVALNEVFVPILQKQFPEIVDFYLPPEGCSYRMAIVSIKKQYPGHAKRVMMGCWSFLRQFMYTKFIVVVDDDVNTRDWKEVIWAITTRMDPVRDTTLIDHTPIDYLDFASPISGLGGKMGLDATNKMPGETSREWGTPIVMDDAVKARVDALWSELGL</sequence>